<comment type="function">
    <text evidence="1">Peptidoglycan-recognition protein probably involved in innate immunity by binding to peptidoglycans (PGN) of bacteria and activating the prophenoloxidase (proPO) cascade immune response. Binds to 1,3-beta-D-glucan and PGN (By similarity).</text>
</comment>
<comment type="subcellular location">
    <subcellularLocation>
        <location evidence="1">Secreted</location>
    </subcellularLocation>
</comment>
<comment type="similarity">
    <text evidence="3">Belongs to the N-acetylmuramoyl-L-alanine amidase 2 family.</text>
</comment>
<name>PGRP3_HOLDI</name>
<keyword id="KW-1015">Disulfide bond</keyword>
<keyword id="KW-0325">Glycoprotein</keyword>
<keyword id="KW-0391">Immunity</keyword>
<keyword id="KW-0399">Innate immunity</keyword>
<keyword id="KW-0964">Secreted</keyword>
<keyword id="KW-0732">Signal</keyword>
<protein>
    <recommendedName>
        <fullName>Peptidoglycan-recognition protein 3</fullName>
    </recommendedName>
    <alternativeName>
        <fullName>Hd-PGRP-3</fullName>
    </alternativeName>
</protein>
<gene>
    <name type="primary">PGRP-3</name>
</gene>
<accession>Q765P2</accession>
<dbReference type="EMBL" id="AB115776">
    <property type="protein sequence ID" value="BAD08318.1"/>
    <property type="molecule type" value="mRNA"/>
</dbReference>
<dbReference type="SMR" id="Q765P2"/>
<dbReference type="GlyCosmos" id="Q765P2">
    <property type="glycosylation" value="1 site, No reported glycans"/>
</dbReference>
<dbReference type="GO" id="GO:0005576">
    <property type="term" value="C:extracellular region"/>
    <property type="evidence" value="ECO:0007669"/>
    <property type="project" value="UniProtKB-SubCell"/>
</dbReference>
<dbReference type="GO" id="GO:0008745">
    <property type="term" value="F:N-acetylmuramoyl-L-alanine amidase activity"/>
    <property type="evidence" value="ECO:0007669"/>
    <property type="project" value="InterPro"/>
</dbReference>
<dbReference type="GO" id="GO:0042834">
    <property type="term" value="F:peptidoglycan binding"/>
    <property type="evidence" value="ECO:0007669"/>
    <property type="project" value="InterPro"/>
</dbReference>
<dbReference type="GO" id="GO:0008270">
    <property type="term" value="F:zinc ion binding"/>
    <property type="evidence" value="ECO:0007669"/>
    <property type="project" value="InterPro"/>
</dbReference>
<dbReference type="GO" id="GO:0045087">
    <property type="term" value="P:innate immune response"/>
    <property type="evidence" value="ECO:0007669"/>
    <property type="project" value="UniProtKB-KW"/>
</dbReference>
<dbReference type="GO" id="GO:0009253">
    <property type="term" value="P:peptidoglycan catabolic process"/>
    <property type="evidence" value="ECO:0007669"/>
    <property type="project" value="InterPro"/>
</dbReference>
<dbReference type="CDD" id="cd06583">
    <property type="entry name" value="PGRP"/>
    <property type="match status" value="1"/>
</dbReference>
<dbReference type="FunFam" id="3.40.80.10:FF:000001">
    <property type="entry name" value="Peptidoglycan recognition protein 1"/>
    <property type="match status" value="1"/>
</dbReference>
<dbReference type="Gene3D" id="3.40.80.10">
    <property type="entry name" value="Peptidoglycan recognition protein-like"/>
    <property type="match status" value="1"/>
</dbReference>
<dbReference type="InterPro" id="IPR036505">
    <property type="entry name" value="Amidase/PGRP_sf"/>
</dbReference>
<dbReference type="InterPro" id="IPR002502">
    <property type="entry name" value="Amidase_domain"/>
</dbReference>
<dbReference type="InterPro" id="IPR017331">
    <property type="entry name" value="Peptidoglycan_recognition"/>
</dbReference>
<dbReference type="InterPro" id="IPR015510">
    <property type="entry name" value="PGRP"/>
</dbReference>
<dbReference type="InterPro" id="IPR006619">
    <property type="entry name" value="PGRP_domain_met/bac"/>
</dbReference>
<dbReference type="PANTHER" id="PTHR11022">
    <property type="entry name" value="PEPTIDOGLYCAN RECOGNITION PROTEIN"/>
    <property type="match status" value="1"/>
</dbReference>
<dbReference type="PANTHER" id="PTHR11022:SF74">
    <property type="entry name" value="PEPTIDOGLYCAN-RECOGNITION PROTEIN SA"/>
    <property type="match status" value="1"/>
</dbReference>
<dbReference type="Pfam" id="PF01510">
    <property type="entry name" value="Amidase_2"/>
    <property type="match status" value="1"/>
</dbReference>
<dbReference type="PIRSF" id="PIRSF037945">
    <property type="entry name" value="PGRPs"/>
    <property type="match status" value="1"/>
</dbReference>
<dbReference type="SMART" id="SM00644">
    <property type="entry name" value="Ami_2"/>
    <property type="match status" value="1"/>
</dbReference>
<dbReference type="SMART" id="SM00701">
    <property type="entry name" value="PGRP"/>
    <property type="match status" value="1"/>
</dbReference>
<dbReference type="SUPFAM" id="SSF55846">
    <property type="entry name" value="N-acetylmuramoyl-L-alanine amidase-like"/>
    <property type="match status" value="1"/>
</dbReference>
<reference key="1">
    <citation type="journal article" date="2004" name="J. Biol. Chem.">
        <title>Peptidoglycan recognition proteins involved in 1,3-beta-D-glucan-dependent prophenoloxidase activation system of insect.</title>
        <authorList>
            <person name="Lee M.H."/>
            <person name="Osaki T."/>
            <person name="Lee J.Y."/>
            <person name="Baek M.J."/>
            <person name="Zhang R."/>
            <person name="Park J.W."/>
            <person name="Kawabata S."/>
            <person name="Soederhaell K."/>
            <person name="Lee B.L."/>
        </authorList>
    </citation>
    <scope>NUCLEOTIDE SEQUENCE [MRNA]</scope>
    <source>
        <tissue>Larva</tissue>
    </source>
</reference>
<sequence length="187" mass="20971">MKAFLVALLISIELALVFAGCPTIISKNRWGGQQARKVEPTTKPLKYVIINHTSGPSCVDEIDCSRMLVYIQNRHMNHLNYNDIGCNFIIGGDGQIYEGAGWQAAASHTPGWNKKSLLIGFIGDYEINRPSLKQLEAGKQLIECAVERGEIEQDYKLVGARTIRQTNSPGKYLFRELQSWKGFTRDP</sequence>
<proteinExistence type="evidence at transcript level"/>
<organism>
    <name type="scientific">Holotrichia diomphalia</name>
    <name type="common">Korean black chafer</name>
    <dbReference type="NCBI Taxonomy" id="33394"/>
    <lineage>
        <taxon>Eukaryota</taxon>
        <taxon>Metazoa</taxon>
        <taxon>Ecdysozoa</taxon>
        <taxon>Arthropoda</taxon>
        <taxon>Hexapoda</taxon>
        <taxon>Insecta</taxon>
        <taxon>Pterygota</taxon>
        <taxon>Neoptera</taxon>
        <taxon>Endopterygota</taxon>
        <taxon>Coleoptera</taxon>
        <taxon>Polyphaga</taxon>
        <taxon>Scarabaeiformia</taxon>
        <taxon>Scarabaeidae</taxon>
        <taxon>Melolonthinae</taxon>
        <taxon>Holotrichia</taxon>
    </lineage>
</organism>
<evidence type="ECO:0000250" key="1"/>
<evidence type="ECO:0000255" key="2"/>
<evidence type="ECO:0000305" key="3"/>
<feature type="signal peptide" evidence="2">
    <location>
        <begin position="1"/>
        <end position="19"/>
    </location>
</feature>
<feature type="chain" id="PRO_0000023918" description="Peptidoglycan-recognition protein 3">
    <location>
        <begin position="20"/>
        <end position="187"/>
    </location>
</feature>
<feature type="domain" description="N-acetylmuramoyl-L-alanine amidase" evidence="2">
    <location>
        <begin position="43"/>
        <end position="170"/>
    </location>
</feature>
<feature type="glycosylation site" description="N-linked (GlcNAc...) asparagine" evidence="2">
    <location>
        <position position="51"/>
    </location>
</feature>
<feature type="disulfide bond" evidence="1">
    <location>
        <begin position="21"/>
        <end position="144"/>
    </location>
</feature>
<feature type="disulfide bond" evidence="1">
    <location>
        <begin position="58"/>
        <end position="64"/>
    </location>
</feature>